<protein>
    <recommendedName>
        <fullName evidence="1">Imidazole glycerol phosphate synthase subunit HisF</fullName>
        <ecNumber evidence="1">4.3.2.10</ecNumber>
    </recommendedName>
    <alternativeName>
        <fullName evidence="1">IGP synthase cyclase subunit</fullName>
    </alternativeName>
    <alternativeName>
        <fullName evidence="1">IGP synthase subunit HisF</fullName>
    </alternativeName>
    <alternativeName>
        <fullName evidence="1">ImGP synthase subunit HisF</fullName>
        <shortName evidence="1">IGPS subunit HisF</shortName>
    </alternativeName>
</protein>
<proteinExistence type="inferred from homology"/>
<comment type="function">
    <text evidence="1">IGPS catalyzes the conversion of PRFAR and glutamine to IGP, AICAR and glutamate. The HisF subunit catalyzes the cyclization activity that produces IGP and AICAR from PRFAR using the ammonia provided by the HisH subunit.</text>
</comment>
<comment type="catalytic activity">
    <reaction evidence="1">
        <text>5-[(5-phospho-1-deoxy-D-ribulos-1-ylimino)methylamino]-1-(5-phospho-beta-D-ribosyl)imidazole-4-carboxamide + L-glutamine = D-erythro-1-(imidazol-4-yl)glycerol 3-phosphate + 5-amino-1-(5-phospho-beta-D-ribosyl)imidazole-4-carboxamide + L-glutamate + H(+)</text>
        <dbReference type="Rhea" id="RHEA:24793"/>
        <dbReference type="ChEBI" id="CHEBI:15378"/>
        <dbReference type="ChEBI" id="CHEBI:29985"/>
        <dbReference type="ChEBI" id="CHEBI:58278"/>
        <dbReference type="ChEBI" id="CHEBI:58359"/>
        <dbReference type="ChEBI" id="CHEBI:58475"/>
        <dbReference type="ChEBI" id="CHEBI:58525"/>
        <dbReference type="EC" id="4.3.2.10"/>
    </reaction>
</comment>
<comment type="pathway">
    <text evidence="1">Amino-acid biosynthesis; L-histidine biosynthesis; L-histidine from 5-phospho-alpha-D-ribose 1-diphosphate: step 5/9.</text>
</comment>
<comment type="subunit">
    <text evidence="1">Heterodimer of HisH and HisF.</text>
</comment>
<comment type="subcellular location">
    <subcellularLocation>
        <location evidence="1">Cytoplasm</location>
    </subcellularLocation>
</comment>
<comment type="similarity">
    <text evidence="1">Belongs to the HisA/HisF family.</text>
</comment>
<organism>
    <name type="scientific">Anoxybacillus flavithermus (strain DSM 21510 / WK1)</name>
    <dbReference type="NCBI Taxonomy" id="491915"/>
    <lineage>
        <taxon>Bacteria</taxon>
        <taxon>Bacillati</taxon>
        <taxon>Bacillota</taxon>
        <taxon>Bacilli</taxon>
        <taxon>Bacillales</taxon>
        <taxon>Anoxybacillaceae</taxon>
        <taxon>Anoxybacillus</taxon>
    </lineage>
</organism>
<dbReference type="EC" id="4.3.2.10" evidence="1"/>
<dbReference type="EMBL" id="CP000922">
    <property type="protein sequence ID" value="ACJ34886.1"/>
    <property type="molecule type" value="Genomic_DNA"/>
</dbReference>
<dbReference type="RefSeq" id="WP_012576025.1">
    <property type="nucleotide sequence ID" value="NC_011567.1"/>
</dbReference>
<dbReference type="SMR" id="B7GL45"/>
<dbReference type="STRING" id="491915.Aflv_2531"/>
<dbReference type="GeneID" id="7038805"/>
<dbReference type="KEGG" id="afl:Aflv_2531"/>
<dbReference type="PATRIC" id="fig|491915.6.peg.2608"/>
<dbReference type="eggNOG" id="COG0107">
    <property type="taxonomic scope" value="Bacteria"/>
</dbReference>
<dbReference type="HOGENOM" id="CLU_048577_4_0_9"/>
<dbReference type="UniPathway" id="UPA00031">
    <property type="reaction ID" value="UER00010"/>
</dbReference>
<dbReference type="Proteomes" id="UP000000742">
    <property type="component" value="Chromosome"/>
</dbReference>
<dbReference type="GO" id="GO:0005737">
    <property type="term" value="C:cytoplasm"/>
    <property type="evidence" value="ECO:0007669"/>
    <property type="project" value="UniProtKB-SubCell"/>
</dbReference>
<dbReference type="GO" id="GO:0000107">
    <property type="term" value="F:imidazoleglycerol-phosphate synthase activity"/>
    <property type="evidence" value="ECO:0007669"/>
    <property type="project" value="UniProtKB-UniRule"/>
</dbReference>
<dbReference type="GO" id="GO:0016829">
    <property type="term" value="F:lyase activity"/>
    <property type="evidence" value="ECO:0007669"/>
    <property type="project" value="UniProtKB-KW"/>
</dbReference>
<dbReference type="GO" id="GO:0000105">
    <property type="term" value="P:L-histidine biosynthetic process"/>
    <property type="evidence" value="ECO:0007669"/>
    <property type="project" value="UniProtKB-UniRule"/>
</dbReference>
<dbReference type="CDD" id="cd04731">
    <property type="entry name" value="HisF"/>
    <property type="match status" value="1"/>
</dbReference>
<dbReference type="FunFam" id="3.20.20.70:FF:000006">
    <property type="entry name" value="Imidazole glycerol phosphate synthase subunit HisF"/>
    <property type="match status" value="1"/>
</dbReference>
<dbReference type="Gene3D" id="3.20.20.70">
    <property type="entry name" value="Aldolase class I"/>
    <property type="match status" value="1"/>
</dbReference>
<dbReference type="HAMAP" id="MF_01013">
    <property type="entry name" value="HisF"/>
    <property type="match status" value="1"/>
</dbReference>
<dbReference type="InterPro" id="IPR013785">
    <property type="entry name" value="Aldolase_TIM"/>
</dbReference>
<dbReference type="InterPro" id="IPR006062">
    <property type="entry name" value="His_biosynth"/>
</dbReference>
<dbReference type="InterPro" id="IPR004651">
    <property type="entry name" value="HisF"/>
</dbReference>
<dbReference type="InterPro" id="IPR050064">
    <property type="entry name" value="IGPS_HisA/HisF"/>
</dbReference>
<dbReference type="InterPro" id="IPR011060">
    <property type="entry name" value="RibuloseP-bd_barrel"/>
</dbReference>
<dbReference type="NCBIfam" id="TIGR00735">
    <property type="entry name" value="hisF"/>
    <property type="match status" value="1"/>
</dbReference>
<dbReference type="PANTHER" id="PTHR21235:SF2">
    <property type="entry name" value="IMIDAZOLE GLYCEROL PHOSPHATE SYNTHASE HISHF"/>
    <property type="match status" value="1"/>
</dbReference>
<dbReference type="PANTHER" id="PTHR21235">
    <property type="entry name" value="IMIDAZOLE GLYCEROL PHOSPHATE SYNTHASE SUBUNIT HISF/H IGP SYNTHASE SUBUNIT HISF/H"/>
    <property type="match status" value="1"/>
</dbReference>
<dbReference type="Pfam" id="PF00977">
    <property type="entry name" value="His_biosynth"/>
    <property type="match status" value="1"/>
</dbReference>
<dbReference type="SUPFAM" id="SSF51366">
    <property type="entry name" value="Ribulose-phoshate binding barrel"/>
    <property type="match status" value="1"/>
</dbReference>
<evidence type="ECO:0000255" key="1">
    <source>
        <dbReference type="HAMAP-Rule" id="MF_01013"/>
    </source>
</evidence>
<accession>B7GL45</accession>
<reference key="1">
    <citation type="journal article" date="2008" name="Genome Biol.">
        <title>Encapsulated in silica: genome, proteome and physiology of the thermophilic bacterium Anoxybacillus flavithermus WK1.</title>
        <authorList>
            <person name="Saw J.H."/>
            <person name="Mountain B.W."/>
            <person name="Feng L."/>
            <person name="Omelchenko M.V."/>
            <person name="Hou S."/>
            <person name="Saito J.A."/>
            <person name="Stott M.B."/>
            <person name="Li D."/>
            <person name="Zhao G."/>
            <person name="Wu J."/>
            <person name="Galperin M.Y."/>
            <person name="Koonin E.V."/>
            <person name="Makarova K.S."/>
            <person name="Wolf Y.I."/>
            <person name="Rigden D.J."/>
            <person name="Dunfield P.F."/>
            <person name="Wang L."/>
            <person name="Alam M."/>
        </authorList>
    </citation>
    <scope>NUCLEOTIDE SEQUENCE [LARGE SCALE GENOMIC DNA]</scope>
    <source>
        <strain>DSM 21510 / WK1</strain>
    </source>
</reference>
<gene>
    <name evidence="1" type="primary">hisF</name>
    <name type="ordered locus">Aflv_2531</name>
</gene>
<feature type="chain" id="PRO_1000134962" description="Imidazole glycerol phosphate synthase subunit HisF">
    <location>
        <begin position="1"/>
        <end position="252"/>
    </location>
</feature>
<feature type="active site" evidence="1">
    <location>
        <position position="11"/>
    </location>
</feature>
<feature type="active site" evidence="1">
    <location>
        <position position="130"/>
    </location>
</feature>
<name>HIS6_ANOFW</name>
<keyword id="KW-0028">Amino-acid biosynthesis</keyword>
<keyword id="KW-0963">Cytoplasm</keyword>
<keyword id="KW-0368">Histidine biosynthesis</keyword>
<keyword id="KW-0456">Lyase</keyword>
<sequence>MITKRIIPCLDVKDGRVVKGVQFVSLRDAGDPVELARAYDEQGADELVFLDISASHEGRKTMVDVVRRVAAQLAIPFTVGGGISTLEDMKTILRAGADKVSVNTAALLRPELITEGANFFGSQCIVVAIDAKYDETMQSWRVYTHGGRRPTDWEVVAWAKEAVKRGAGEILLTSMDRDGGKDGFDLALTKRVSEAVSVPVIASGGAGCAQHFVDVFQTAQADAALAASIFHYQETSVQQVKQYVREQGVNVR</sequence>